<gene>
    <name evidence="2" type="primary">waaQ</name>
    <name type="synonym">rfaQ</name>
</gene>
<dbReference type="EC" id="2.4.99.25" evidence="1"/>
<dbReference type="EMBL" id="AF019746">
    <property type="protein sequence ID" value="AAC69679.1"/>
    <property type="molecule type" value="Genomic_DNA"/>
</dbReference>
<dbReference type="SMR" id="Q9R9D5"/>
<dbReference type="STRING" id="585034.ECIAI1_3802"/>
<dbReference type="eggNOG" id="COG0859">
    <property type="taxonomic scope" value="Bacteria"/>
</dbReference>
<dbReference type="UniPathway" id="UPA00958"/>
<dbReference type="GO" id="GO:0005829">
    <property type="term" value="C:cytosol"/>
    <property type="evidence" value="ECO:0007669"/>
    <property type="project" value="TreeGrafter"/>
</dbReference>
<dbReference type="GO" id="GO:0008713">
    <property type="term" value="F:ADP-heptose-lipopolysaccharide heptosyltransferase activity"/>
    <property type="evidence" value="ECO:0007669"/>
    <property type="project" value="TreeGrafter"/>
</dbReference>
<dbReference type="GO" id="GO:0009244">
    <property type="term" value="P:lipopolysaccharide core region biosynthetic process"/>
    <property type="evidence" value="ECO:0007669"/>
    <property type="project" value="UniProtKB-UniPathway"/>
</dbReference>
<dbReference type="CDD" id="cd03789">
    <property type="entry name" value="GT9_LPS_heptosyltransferase"/>
    <property type="match status" value="1"/>
</dbReference>
<dbReference type="FunFam" id="3.40.50.2000:FF:000191">
    <property type="entry name" value="Lipopolysaccharide core heptosyltransferase RfaQ"/>
    <property type="match status" value="1"/>
</dbReference>
<dbReference type="Gene3D" id="3.40.50.2000">
    <property type="entry name" value="Glycogen Phosphorylase B"/>
    <property type="match status" value="2"/>
</dbReference>
<dbReference type="InterPro" id="IPR002201">
    <property type="entry name" value="Glyco_trans_9"/>
</dbReference>
<dbReference type="InterPro" id="IPR011916">
    <property type="entry name" value="LipoPS_heptosylTferase-III"/>
</dbReference>
<dbReference type="InterPro" id="IPR051199">
    <property type="entry name" value="LPS_LOS_Heptosyltrfase"/>
</dbReference>
<dbReference type="NCBIfam" id="TIGR02201">
    <property type="entry name" value="heptsyl_trn_III"/>
    <property type="match status" value="1"/>
</dbReference>
<dbReference type="NCBIfam" id="NF007742">
    <property type="entry name" value="PRK10422.1"/>
    <property type="match status" value="1"/>
</dbReference>
<dbReference type="PANTHER" id="PTHR30160:SF1">
    <property type="entry name" value="LIPOPOLYSACCHARIDE 1,2-N-ACETYLGLUCOSAMINETRANSFERASE-RELATED"/>
    <property type="match status" value="1"/>
</dbReference>
<dbReference type="PANTHER" id="PTHR30160">
    <property type="entry name" value="TETRAACYLDISACCHARIDE 4'-KINASE-RELATED"/>
    <property type="match status" value="1"/>
</dbReference>
<dbReference type="Pfam" id="PF01075">
    <property type="entry name" value="Glyco_transf_9"/>
    <property type="match status" value="1"/>
</dbReference>
<dbReference type="SUPFAM" id="SSF53756">
    <property type="entry name" value="UDP-Glycosyltransferase/glycogen phosphorylase"/>
    <property type="match status" value="1"/>
</dbReference>
<sequence>MRFHGDMLLTTPVISSLKKNYPDAKIDVLLYQDTIPILSENPEINALYGIKNKKAKASEKIANFFHLIKVLRANKYDLIVNLTDQWMVAILVRLLNARVKISQDYHHRQSAFWRKSFTHLVPLQGGNVVESNLSVLTPLGVDSLVKQTTMSYPPASWKRMRRELDHAGVGQNYVVIQPTARQIFKCWDNAKFSAVIDALHARGYEVVLTSGPDKDDLACVNEIAQGCQTPPVTALAGKVTFPELGALIDHAQLFIGVDSAPAHIAAAVNTPLISLFGATDHIFWRPWSNNMIQFWAGDYREMPTRDQRDRNEMYLSVIPAADVIAAVDKLLPSSTTGTSL</sequence>
<proteinExistence type="evidence at protein level"/>
<organism>
    <name type="scientific">Escherichia coli</name>
    <dbReference type="NCBI Taxonomy" id="562"/>
    <lineage>
        <taxon>Bacteria</taxon>
        <taxon>Pseudomonadati</taxon>
        <taxon>Pseudomonadota</taxon>
        <taxon>Gammaproteobacteria</taxon>
        <taxon>Enterobacterales</taxon>
        <taxon>Enterobacteriaceae</taxon>
        <taxon>Escherichia</taxon>
    </lineage>
</organism>
<reference key="1">
    <citation type="journal article" date="1998" name="J. Biol. Chem.">
        <title>The assembly system for the outer core portion of R1- and R4-type lipopolysaccharides of Escherichia coli. The R1 core-specific beta-glucosyltransferase provides a novel attachment site for O-polysaccharides.</title>
        <authorList>
            <person name="Heinrichs D.E."/>
            <person name="Yethon J.A."/>
            <person name="Amor P.A."/>
            <person name="Whitfield C."/>
        </authorList>
    </citation>
    <scope>NUCLEOTIDE SEQUENCE [GENOMIC DNA]</scope>
    <source>
        <strain>F470</strain>
    </source>
</reference>
<reference key="2">
    <citation type="journal article" date="1998" name="J. Biol. Chem.">
        <title>Involvement of waaY, waaQ, and waaP in the modification of Escherichia coli lipopolysaccharide and their role in the formation of a stable outer membrane.</title>
        <authorList>
            <person name="Yethon J.A."/>
            <person name="Heinrichs D.E."/>
            <person name="Monteiro M.A."/>
            <person name="Perry M.B."/>
            <person name="Whitfield C."/>
        </authorList>
    </citation>
    <scope>FUNCTION AS A HEPTOSYLTRANSFERASE</scope>
    <scope>CATALYTIC ACTIVITY</scope>
    <scope>PATHWAY</scope>
    <scope>DISRUPTION PHENOTYPE</scope>
    <source>
        <strain>F470</strain>
    </source>
</reference>
<accession>Q9R9D5</accession>
<comment type="function">
    <text evidence="1">Glycosyltransferase involved in the biosynthesis of the core oligosaccharide region of lipopolysaccharide (LPS) (PubMed:9756860). Catalyzes the addition of the third heptose unit (HepIII) to the second heptose unit (HepII) of the phospho-Hep2-Kdo2-lipid A module (PubMed:9756860). The transfer of HepIII seems to be a prerequisite to the phosphorylation of the second heptose unit (PubMed:9756860).</text>
</comment>
<comment type="catalytic activity">
    <reaction evidence="1">
        <text>an L-alpha-D-Hep-(1-&gt;3)-4-O-phospho-L-alpha-D-Hep-(1-&gt;5)-[alpha-Kdo-(2-&gt;4)]-alpha-Kdo-(2-&gt;6)-lipid A + ADP-L-glycero-beta-D-manno-heptose = an L-alpha-D-Hep-(1-&gt;7)-L-alpha-D-Hep-(1-&gt;3)-4-O-phospho-L-alpha-D-Hep-(1-&gt;5)-[alpha-Kdo-(2-&gt;4)]-alpha-Kdo-(2-&gt;6)-lipid A + ADP + H(+)</text>
        <dbReference type="Rhea" id="RHEA:74095"/>
        <dbReference type="ChEBI" id="CHEBI:15378"/>
        <dbReference type="ChEBI" id="CHEBI:61506"/>
        <dbReference type="ChEBI" id="CHEBI:193070"/>
        <dbReference type="ChEBI" id="CHEBI:193071"/>
        <dbReference type="ChEBI" id="CHEBI:456216"/>
        <dbReference type="EC" id="2.4.99.25"/>
    </reaction>
</comment>
<comment type="catalytic activity">
    <reaction evidence="1">
        <text>L-alpha-D-Hep-(1-&gt;3)-4-O-phospho-L-alpha-D-Hep-(1-&gt;5)-[alpha-Kdo-(2-&gt;4)]-alpha-Kdo-(2-&gt;6)-lipid A (E. coli) + ADP-L-glycero-beta-D-manno-heptose = L-alpha-D-Hep-(1-&gt;7)-L-alpha-D-Hep-(1-&gt;3)-4-O-phospho-L-alpha-D-Hep-(1-&gt;5)-[alpha-Kdo-(2-&gt;4)]-alpha-Kdo-(2-&gt;6)-lipid A (E. coli) + ADP + H(+)</text>
        <dbReference type="Rhea" id="RHEA:74099"/>
        <dbReference type="ChEBI" id="CHEBI:15378"/>
        <dbReference type="ChEBI" id="CHEBI:61506"/>
        <dbReference type="ChEBI" id="CHEBI:193075"/>
        <dbReference type="ChEBI" id="CHEBI:193076"/>
        <dbReference type="ChEBI" id="CHEBI:456216"/>
        <dbReference type="EC" id="2.4.99.25"/>
    </reaction>
</comment>
<comment type="pathway">
    <text evidence="1">Bacterial outer membrane biogenesis; LPS core biosynthesis.</text>
</comment>
<comment type="disruption phenotype">
    <text evidence="1">Mutation of the gene results in loss of the branch HepIII residue on HepII and impedes the activity of WaaY.</text>
</comment>
<comment type="similarity">
    <text evidence="3">Belongs to the glycosyltransferase 9 family.</text>
</comment>
<name>WAAQ_ECOLX</name>
<protein>
    <recommendedName>
        <fullName evidence="3">Lipopolysaccharide heptosyltransferase 3</fullName>
        <ecNumber evidence="1">2.4.99.25</ecNumber>
    </recommendedName>
    <alternativeName>
        <fullName evidence="3">ADP-heptose:lipopolysaccharide heptosyltransferase III</fullName>
        <shortName evidence="3">ADP-heptose:LPS heptosyltransferase III</shortName>
        <shortName evidence="3">Heptosyltransferase III</shortName>
    </alternativeName>
    <alternativeName>
        <fullName evidence="2">HepIII transferase</fullName>
    </alternativeName>
</protein>
<feature type="chain" id="PRO_0000383675" description="Lipopolysaccharide heptosyltransferase 3">
    <location>
        <begin position="1"/>
        <end position="340"/>
    </location>
</feature>
<keyword id="KW-0328">Glycosyltransferase</keyword>
<keyword id="KW-0448">Lipopolysaccharide biosynthesis</keyword>
<keyword id="KW-0808">Transferase</keyword>
<evidence type="ECO:0000269" key="1">
    <source>
    </source>
</evidence>
<evidence type="ECO:0000303" key="2">
    <source>
    </source>
</evidence>
<evidence type="ECO:0000305" key="3"/>